<proteinExistence type="evidence at protein level"/>
<dbReference type="EC" id="1.2.1.58"/>
<dbReference type="EMBL" id="AJ428571">
    <property type="protein sequence ID" value="CAD21690.1"/>
    <property type="molecule type" value="Genomic_DNA"/>
</dbReference>
<dbReference type="SMR" id="Q8L3B2"/>
<dbReference type="KEGG" id="ag:CAD21690"/>
<dbReference type="BioCyc" id="MetaCyc:MONOMER-124222"/>
<dbReference type="GO" id="GO:0051539">
    <property type="term" value="F:4 iron, 4 sulfur cluster binding"/>
    <property type="evidence" value="ECO:0007669"/>
    <property type="project" value="UniProtKB-KW"/>
</dbReference>
<dbReference type="GO" id="GO:0046872">
    <property type="term" value="F:metal ion binding"/>
    <property type="evidence" value="ECO:0007669"/>
    <property type="project" value="UniProtKB-KW"/>
</dbReference>
<dbReference type="GO" id="GO:0051287">
    <property type="term" value="F:NAD binding"/>
    <property type="evidence" value="ECO:0000314"/>
    <property type="project" value="UniProtKB"/>
</dbReference>
<dbReference type="GO" id="GO:0016625">
    <property type="term" value="F:oxidoreductase activity, acting on the aldehyde or oxo group of donors, iron-sulfur protein as acceptor"/>
    <property type="evidence" value="ECO:0007669"/>
    <property type="project" value="InterPro"/>
</dbReference>
<dbReference type="GO" id="GO:0047110">
    <property type="term" value="F:phenylglyoxylate dehydrogenase (acylating) activity"/>
    <property type="evidence" value="ECO:0000314"/>
    <property type="project" value="UniProtKB"/>
</dbReference>
<dbReference type="GO" id="GO:0006558">
    <property type="term" value="P:L-phenylalanine metabolic process"/>
    <property type="evidence" value="ECO:0000314"/>
    <property type="project" value="UniProtKB"/>
</dbReference>
<dbReference type="Gene3D" id="3.30.70.20">
    <property type="match status" value="1"/>
</dbReference>
<dbReference type="InterPro" id="IPR017896">
    <property type="entry name" value="4Fe4S_Fe-S-bd"/>
</dbReference>
<dbReference type="InterPro" id="IPR017900">
    <property type="entry name" value="4Fe4S_Fe_S_CS"/>
</dbReference>
<dbReference type="InterPro" id="IPR054812">
    <property type="entry name" value="PadF"/>
</dbReference>
<dbReference type="InterPro" id="IPR011898">
    <property type="entry name" value="PorD_KorD"/>
</dbReference>
<dbReference type="NCBIfam" id="NF045763">
    <property type="entry name" value="PhenlGlyoxDHPadF"/>
    <property type="match status" value="1"/>
</dbReference>
<dbReference type="NCBIfam" id="TIGR02179">
    <property type="entry name" value="PorD_KorD"/>
    <property type="match status" value="1"/>
</dbReference>
<dbReference type="PANTHER" id="PTHR43724">
    <property type="entry name" value="PYRUVATE SYNTHASE SUBUNIT PORD"/>
    <property type="match status" value="1"/>
</dbReference>
<dbReference type="PANTHER" id="PTHR43724:SF1">
    <property type="entry name" value="PYRUVATE SYNTHASE SUBUNIT PORD"/>
    <property type="match status" value="1"/>
</dbReference>
<dbReference type="Pfam" id="PF00037">
    <property type="entry name" value="Fer4"/>
    <property type="match status" value="1"/>
</dbReference>
<dbReference type="SUPFAM" id="SSF54862">
    <property type="entry name" value="4Fe-4S ferredoxins"/>
    <property type="match status" value="1"/>
</dbReference>
<dbReference type="PROSITE" id="PS00198">
    <property type="entry name" value="4FE4S_FER_1"/>
    <property type="match status" value="2"/>
</dbReference>
<dbReference type="PROSITE" id="PS51379">
    <property type="entry name" value="4FE4S_FER_2"/>
    <property type="match status" value="2"/>
</dbReference>
<accession>Q8L3B2</accession>
<name>PADF_AROEV</name>
<evidence type="ECO:0000255" key="1">
    <source>
        <dbReference type="PROSITE-ProRule" id="PRU00711"/>
    </source>
</evidence>
<evidence type="ECO:0000269" key="2">
    <source>
    </source>
</evidence>
<evidence type="ECO:0000305" key="3">
    <source>
    </source>
</evidence>
<reference key="1">
    <citation type="submission" date="2002-01" db="EMBL/GenBank/DDBJ databases">
        <title>Characterization of genes involved in anaerobic phenylacetate degradation in Azoarcus evansii.</title>
        <authorList>
            <person name="Haas S."/>
            <person name="Hammer E."/>
            <person name="Herrmann H."/>
            <person name="Burchhardt G."/>
        </authorList>
    </citation>
    <scope>NUCLEOTIDE SEQUENCE [GENOMIC DNA]</scope>
    <source>
        <strain>DSM 6898 / NBRC 107771 / KB740</strain>
    </source>
</reference>
<reference key="2">
    <citation type="journal article" date="1998" name="Eur. J. Biochem.">
        <title>Phenylglyoxylate:NAD+ oxidoreductase (CoA benzoylating), a new enzyme of anaerobic phenylalanine metabolism in the denitrifying bacterium Azoarcus evansii.</title>
        <authorList>
            <person name="Hirsch W."/>
            <person name="Schagger H."/>
            <person name="Fuchs G."/>
        </authorList>
    </citation>
    <scope>PROTEIN SEQUENCE OF 2-13</scope>
    <scope>FUNCTION AS A PHENYLGLYOXYLATE DEHYDROGENASE</scope>
    <scope>CATALYTIC ACTIVITY</scope>
    <scope>BIOPHYSICOCHEMICAL PROPERTIES</scope>
    <scope>COFACTOR</scope>
    <scope>ACTIVITY REGULATION</scope>
    <scope>SUBSTRATE SPECIFICITY</scope>
    <scope>SUBUNIT</scope>
    <scope>INDUCTION</scope>
    <source>
        <strain>DSM 6898 / NBRC 107771 / KB740</strain>
    </source>
</reference>
<sequence>MSRHQSYPLFNLEQAGVPDDLCPVATVVSPMLPGDWRSMRPVVDRDKCVKCAVCWLYCPVQCVEEHAAWFDFNLKTCKGCGICANECPQRRSR</sequence>
<protein>
    <recommendedName>
        <fullName>NADH-dependent phenylglyoxylate dehydrogenase subunit delta</fullName>
        <ecNumber>1.2.1.58</ecNumber>
    </recommendedName>
    <alternativeName>
        <fullName>Phenylglyoxylate:NAD oxidoreductase</fullName>
    </alternativeName>
    <alternativeName>
        <fullName>Phenylglyoxylate:acceptor oxidoreductase</fullName>
    </alternativeName>
</protein>
<comment type="function">
    <text evidence="2">Involved in the anaerobic metabolism of phenylalanine and phenylacetate. Catalyzes the oxidative decarboxylation of phenylglyoxylate to benzoyl-CoA and CO(2). It can also react slowly with 2-oxo-3-methylbutanoate and use different electron acceptors such as benzyl viologen, methyl viologen, FAD or FMN, but NAD seems to be the physiological electron acceptor. Also catalyzes an isotope exchange between CO(2) and the carboxyl group which proves partial or complete reversibility of the oxidative decarboxylation reaction.</text>
</comment>
<comment type="catalytic activity">
    <reaction evidence="2">
        <text>phenylglyoxylate + NAD(+) + CoA = benzoyl-CoA + CO2 + NADH</text>
        <dbReference type="Rhea" id="RHEA:10372"/>
        <dbReference type="ChEBI" id="CHEBI:16526"/>
        <dbReference type="ChEBI" id="CHEBI:36656"/>
        <dbReference type="ChEBI" id="CHEBI:57287"/>
        <dbReference type="ChEBI" id="CHEBI:57369"/>
        <dbReference type="ChEBI" id="CHEBI:57540"/>
        <dbReference type="ChEBI" id="CHEBI:57945"/>
        <dbReference type="EC" id="1.2.1.58"/>
    </reaction>
</comment>
<comment type="cofactor">
    <cofactor evidence="3">
        <name>[4Fe-4S] cluster</name>
        <dbReference type="ChEBI" id="CHEBI:49883"/>
    </cofactor>
    <text evidence="3">Binds 3 [4Fe-4S] clusters per heteropentamers.</text>
</comment>
<comment type="activity regulation">
    <text evidence="2">Activated by magnesium ions and thiamine diphosphate.</text>
</comment>
<comment type="biophysicochemical properties">
    <kinetics>
        <KM evidence="2">45 uM for phenylglyoxylate (under anaerobic conditions at 37 degrees Celsius and pH 7.8)</KM>
        <KM evidence="2">55 uM for coenzyme-A (under anaerobic conditions at 37 degrees Celsius and pH 7.8)</KM>
        <KM evidence="2">74 uM for NAD (under anaerobic conditions at 37 degrees Celsius and pH 7.8)</KM>
    </kinetics>
    <phDependence>
        <text evidence="2">Optimum pH is 8 when measured with benzyl viologen. Half-maximal activities are obtained at pH 9 and pH 6.8.</text>
    </phDependence>
</comment>
<comment type="subunit">
    <text evidence="2">Dimer of heteropentamers composed of an alpha (PadG), a beta (PadI), a gamma (PadE), a delta (PadF) and an epsilon (PadH) subunit.</text>
</comment>
<comment type="induction">
    <text evidence="2">Induced anaerobically by phenylalanine, phenylacetate or phenylglyoxylate.</text>
</comment>
<gene>
    <name type="primary">padF</name>
</gene>
<feature type="chain" id="PRO_0000418538" description="NADH-dependent phenylglyoxylate dehydrogenase subunit delta">
    <location>
        <begin position="1"/>
        <end position="93"/>
    </location>
</feature>
<feature type="domain" description="4Fe-4S ferredoxin-type 1" evidence="1">
    <location>
        <begin position="39"/>
        <end position="68"/>
    </location>
</feature>
<feature type="domain" description="4Fe-4S ferredoxin-type 2" evidence="1">
    <location>
        <begin position="66"/>
        <end position="93"/>
    </location>
</feature>
<keyword id="KW-0004">4Fe-4S</keyword>
<keyword id="KW-0903">Direct protein sequencing</keyword>
<keyword id="KW-0408">Iron</keyword>
<keyword id="KW-0411">Iron-sulfur</keyword>
<keyword id="KW-0479">Metal-binding</keyword>
<keyword id="KW-0520">NAD</keyword>
<keyword id="KW-0560">Oxidoreductase</keyword>
<keyword id="KW-0677">Repeat</keyword>
<organism>
    <name type="scientific">Aromatoleum evansii</name>
    <name type="common">Azoarcus evansii</name>
    <dbReference type="NCBI Taxonomy" id="59406"/>
    <lineage>
        <taxon>Bacteria</taxon>
        <taxon>Pseudomonadati</taxon>
        <taxon>Pseudomonadota</taxon>
        <taxon>Betaproteobacteria</taxon>
        <taxon>Rhodocyclales</taxon>
        <taxon>Rhodocyclaceae</taxon>
        <taxon>Aromatoleum</taxon>
    </lineage>
</organism>